<dbReference type="EMBL" id="CP001063">
    <property type="protein sequence ID" value="ACD06443.1"/>
    <property type="molecule type" value="Genomic_DNA"/>
</dbReference>
<dbReference type="RefSeq" id="WP_000133034.1">
    <property type="nucleotide sequence ID" value="NC_010658.1"/>
</dbReference>
<dbReference type="SMR" id="B2U207"/>
<dbReference type="STRING" id="344609.SbBS512_E3603"/>
<dbReference type="KEGG" id="sbc:SbBS512_E3603"/>
<dbReference type="HOGENOM" id="CLU_006301_6_3_6"/>
<dbReference type="Proteomes" id="UP000001030">
    <property type="component" value="Chromosome"/>
</dbReference>
<dbReference type="GO" id="GO:0005829">
    <property type="term" value="C:cytosol"/>
    <property type="evidence" value="ECO:0007669"/>
    <property type="project" value="TreeGrafter"/>
</dbReference>
<dbReference type="GO" id="GO:0005525">
    <property type="term" value="F:GTP binding"/>
    <property type="evidence" value="ECO:0007669"/>
    <property type="project" value="UniProtKB-KW"/>
</dbReference>
<dbReference type="GO" id="GO:0003924">
    <property type="term" value="F:GTPase activity"/>
    <property type="evidence" value="ECO:0007669"/>
    <property type="project" value="UniProtKB-UniRule"/>
</dbReference>
<dbReference type="GO" id="GO:0097216">
    <property type="term" value="F:guanosine tetraphosphate binding"/>
    <property type="evidence" value="ECO:0007669"/>
    <property type="project" value="UniProtKB-ARBA"/>
</dbReference>
<dbReference type="GO" id="GO:0003743">
    <property type="term" value="F:translation initiation factor activity"/>
    <property type="evidence" value="ECO:0007669"/>
    <property type="project" value="UniProtKB-UniRule"/>
</dbReference>
<dbReference type="CDD" id="cd01887">
    <property type="entry name" value="IF2_eIF5B"/>
    <property type="match status" value="1"/>
</dbReference>
<dbReference type="CDD" id="cd03702">
    <property type="entry name" value="IF2_mtIF2_II"/>
    <property type="match status" value="1"/>
</dbReference>
<dbReference type="CDD" id="cd03692">
    <property type="entry name" value="mtIF2_IVc"/>
    <property type="match status" value="1"/>
</dbReference>
<dbReference type="FunFam" id="2.40.30.10:FF:000007">
    <property type="entry name" value="Translation initiation factor IF-2"/>
    <property type="match status" value="1"/>
</dbReference>
<dbReference type="FunFam" id="2.40.30.10:FF:000008">
    <property type="entry name" value="Translation initiation factor IF-2"/>
    <property type="match status" value="1"/>
</dbReference>
<dbReference type="FunFam" id="3.30.56.50:FF:000001">
    <property type="entry name" value="Translation initiation factor IF-2"/>
    <property type="match status" value="1"/>
</dbReference>
<dbReference type="FunFam" id="3.40.50.10050:FF:000001">
    <property type="entry name" value="Translation initiation factor IF-2"/>
    <property type="match status" value="1"/>
</dbReference>
<dbReference type="FunFam" id="3.40.50.300:FF:000019">
    <property type="entry name" value="Translation initiation factor IF-2"/>
    <property type="match status" value="1"/>
</dbReference>
<dbReference type="Gene3D" id="3.40.50.300">
    <property type="entry name" value="P-loop containing nucleotide triphosphate hydrolases"/>
    <property type="match status" value="1"/>
</dbReference>
<dbReference type="Gene3D" id="3.30.56.50">
    <property type="entry name" value="Putative DNA-binding domain, N-terminal subdomain of bacterial translation initiation factor IF2"/>
    <property type="match status" value="1"/>
</dbReference>
<dbReference type="Gene3D" id="2.40.30.10">
    <property type="entry name" value="Translation factors"/>
    <property type="match status" value="2"/>
</dbReference>
<dbReference type="Gene3D" id="3.40.50.10050">
    <property type="entry name" value="Translation initiation factor IF- 2, domain 3"/>
    <property type="match status" value="1"/>
</dbReference>
<dbReference type="HAMAP" id="MF_00100_B">
    <property type="entry name" value="IF_2_B"/>
    <property type="match status" value="1"/>
</dbReference>
<dbReference type="InterPro" id="IPR009061">
    <property type="entry name" value="DNA-bd_dom_put_sf"/>
</dbReference>
<dbReference type="InterPro" id="IPR053905">
    <property type="entry name" value="EF-G-like_DII"/>
</dbReference>
<dbReference type="InterPro" id="IPR004161">
    <property type="entry name" value="EFTu-like_2"/>
</dbReference>
<dbReference type="InterPro" id="IPR013575">
    <property type="entry name" value="IF2_assoc_dom_bac"/>
</dbReference>
<dbReference type="InterPro" id="IPR044145">
    <property type="entry name" value="IF2_II"/>
</dbReference>
<dbReference type="InterPro" id="IPR006847">
    <property type="entry name" value="IF2_N"/>
</dbReference>
<dbReference type="InterPro" id="IPR027417">
    <property type="entry name" value="P-loop_NTPase"/>
</dbReference>
<dbReference type="InterPro" id="IPR005225">
    <property type="entry name" value="Small_GTP-bd"/>
</dbReference>
<dbReference type="InterPro" id="IPR000795">
    <property type="entry name" value="T_Tr_GTP-bd_dom"/>
</dbReference>
<dbReference type="InterPro" id="IPR000178">
    <property type="entry name" value="TF_IF2_bacterial-like"/>
</dbReference>
<dbReference type="InterPro" id="IPR015760">
    <property type="entry name" value="TIF_IF2"/>
</dbReference>
<dbReference type="InterPro" id="IPR023115">
    <property type="entry name" value="TIF_IF2_dom3"/>
</dbReference>
<dbReference type="InterPro" id="IPR036925">
    <property type="entry name" value="TIF_IF2_dom3_sf"/>
</dbReference>
<dbReference type="InterPro" id="IPR009000">
    <property type="entry name" value="Transl_B-barrel_sf"/>
</dbReference>
<dbReference type="NCBIfam" id="TIGR00487">
    <property type="entry name" value="IF-2"/>
    <property type="match status" value="1"/>
</dbReference>
<dbReference type="NCBIfam" id="TIGR00231">
    <property type="entry name" value="small_GTP"/>
    <property type="match status" value="1"/>
</dbReference>
<dbReference type="PANTHER" id="PTHR43381:SF5">
    <property type="entry name" value="TR-TYPE G DOMAIN-CONTAINING PROTEIN"/>
    <property type="match status" value="1"/>
</dbReference>
<dbReference type="PANTHER" id="PTHR43381">
    <property type="entry name" value="TRANSLATION INITIATION FACTOR IF-2-RELATED"/>
    <property type="match status" value="1"/>
</dbReference>
<dbReference type="Pfam" id="PF22042">
    <property type="entry name" value="EF-G_D2"/>
    <property type="match status" value="1"/>
</dbReference>
<dbReference type="Pfam" id="PF00009">
    <property type="entry name" value="GTP_EFTU"/>
    <property type="match status" value="1"/>
</dbReference>
<dbReference type="Pfam" id="PF03144">
    <property type="entry name" value="GTP_EFTU_D2"/>
    <property type="match status" value="1"/>
</dbReference>
<dbReference type="Pfam" id="PF11987">
    <property type="entry name" value="IF-2"/>
    <property type="match status" value="1"/>
</dbReference>
<dbReference type="Pfam" id="PF08364">
    <property type="entry name" value="IF2_assoc"/>
    <property type="match status" value="1"/>
</dbReference>
<dbReference type="Pfam" id="PF04760">
    <property type="entry name" value="IF2_N"/>
    <property type="match status" value="2"/>
</dbReference>
<dbReference type="SUPFAM" id="SSF52156">
    <property type="entry name" value="Initiation factor IF2/eIF5b, domain 3"/>
    <property type="match status" value="1"/>
</dbReference>
<dbReference type="SUPFAM" id="SSF52540">
    <property type="entry name" value="P-loop containing nucleoside triphosphate hydrolases"/>
    <property type="match status" value="1"/>
</dbReference>
<dbReference type="SUPFAM" id="SSF46955">
    <property type="entry name" value="Putative DNA-binding domain"/>
    <property type="match status" value="1"/>
</dbReference>
<dbReference type="SUPFAM" id="SSF50447">
    <property type="entry name" value="Translation proteins"/>
    <property type="match status" value="2"/>
</dbReference>
<dbReference type="PROSITE" id="PS51722">
    <property type="entry name" value="G_TR_2"/>
    <property type="match status" value="1"/>
</dbReference>
<dbReference type="PROSITE" id="PS01176">
    <property type="entry name" value="IF2"/>
    <property type="match status" value="1"/>
</dbReference>
<feature type="chain" id="PRO_1000093826" description="Translation initiation factor IF-2">
    <location>
        <begin position="1"/>
        <end position="890"/>
    </location>
</feature>
<feature type="domain" description="tr-type G">
    <location>
        <begin position="389"/>
        <end position="558"/>
    </location>
</feature>
<feature type="region of interest" description="Disordered" evidence="3">
    <location>
        <begin position="45"/>
        <end position="303"/>
    </location>
</feature>
<feature type="region of interest" description="G1" evidence="1">
    <location>
        <begin position="398"/>
        <end position="405"/>
    </location>
</feature>
<feature type="region of interest" description="G2" evidence="1">
    <location>
        <begin position="423"/>
        <end position="427"/>
    </location>
</feature>
<feature type="region of interest" description="G3" evidence="1">
    <location>
        <begin position="444"/>
        <end position="447"/>
    </location>
</feature>
<feature type="region of interest" description="G4" evidence="1">
    <location>
        <begin position="498"/>
        <end position="501"/>
    </location>
</feature>
<feature type="region of interest" description="G5" evidence="1">
    <location>
        <begin position="534"/>
        <end position="536"/>
    </location>
</feature>
<feature type="compositionally biased region" description="Polar residues" evidence="3">
    <location>
        <begin position="67"/>
        <end position="81"/>
    </location>
</feature>
<feature type="compositionally biased region" description="Basic and acidic residues" evidence="3">
    <location>
        <begin position="92"/>
        <end position="217"/>
    </location>
</feature>
<feature type="compositionally biased region" description="Basic residues" evidence="3">
    <location>
        <begin position="252"/>
        <end position="266"/>
    </location>
</feature>
<feature type="compositionally biased region" description="Basic and acidic residues" evidence="3">
    <location>
        <begin position="267"/>
        <end position="280"/>
    </location>
</feature>
<feature type="binding site" evidence="2">
    <location>
        <begin position="398"/>
        <end position="405"/>
    </location>
    <ligand>
        <name>GTP</name>
        <dbReference type="ChEBI" id="CHEBI:37565"/>
    </ligand>
</feature>
<feature type="binding site" evidence="2">
    <location>
        <begin position="444"/>
        <end position="448"/>
    </location>
    <ligand>
        <name>GTP</name>
        <dbReference type="ChEBI" id="CHEBI:37565"/>
    </ligand>
</feature>
<feature type="binding site" evidence="2">
    <location>
        <begin position="498"/>
        <end position="501"/>
    </location>
    <ligand>
        <name>GTP</name>
        <dbReference type="ChEBI" id="CHEBI:37565"/>
    </ligand>
</feature>
<feature type="modified residue" description="N6-acetyllysine" evidence="1">
    <location>
        <position position="808"/>
    </location>
</feature>
<sequence length="890" mass="97350">MTDVTIKTLAAERQTSVERLVQQFADAGIRKSADDSVSAKEKQTLIDHLNQKNSGPDKLTLQRKTRSTLNIPGTGGKSKSVQIEVRKKRTFVKRDPQEAERLAAEEQAQREAEEQARREAEESAKREAQQKAEREAAEQAKREAAEQAKREAAEKDKVSNQQDDMTKNAQAEKARREQEAAELKRKAEEEARRKLEEEARRVAEEARRMAEENKWTDNAEPTEDSSDYHVTTSQHARQAEDESDREVEGGRGRGRNAKAARPKKGNKHAESKADREEARAAVRGGKGGKRKGSSLQQGFQKPAQAVNRDVVIGETITVGELANKMAVKGSQVIKAMMKLGAMATINQVIDQETAQLVAEEMGHKVILRRENELEEAVMSDRDTGAAAEPRAPVVTIMGHVDHGKTSLLDYIRSTKVASGEAGGITQHIGAYHVETENGMITFLDTPGHAAFTSMRARGAQATDIVVLVVAADDGVMPQTIEAIQHAKAAQVPVVVAVNKIDKPEADPDRVKNELSQYGILPEEWGGESQFVHVSAKAGTGIDELLDAILLQAEVLELKAVRKGMASGAVIESFLDKGRGPVATVLVREGTLHKGDIVLCGFEYGRVRAMRNELGQEVLEAGPSIPVEILGLSGVPAAGDEVTVVRDEKKAREVALYRQGKFREVKLARQQKSKLENMFANMTEGEVHEVNIVLKADVQGSVEAISDSLLKLSTDEVKVKIIGSGVGGITETDATLAAASNAILVGFNVRADASARKVIEAESLDLRYYSVIYNLIDEVKAAMSGMLSPELKQQIIGLAEVRDVFKSPKFGAIAGCMVTEGVVKRHNPIRVLRDNVVIYEGELESLRRFKDDVNEVRNGMECGIGVKNYNDVRTGDVIEVFEIIEIQRTIA</sequence>
<keyword id="KW-0007">Acetylation</keyword>
<keyword id="KW-0963">Cytoplasm</keyword>
<keyword id="KW-0342">GTP-binding</keyword>
<keyword id="KW-0396">Initiation factor</keyword>
<keyword id="KW-0547">Nucleotide-binding</keyword>
<keyword id="KW-0648">Protein biosynthesis</keyword>
<keyword id="KW-1185">Reference proteome</keyword>
<gene>
    <name evidence="2" type="primary">infB</name>
    <name type="ordered locus">SbBS512_E3603</name>
</gene>
<accession>B2U207</accession>
<protein>
    <recommendedName>
        <fullName evidence="2">Translation initiation factor IF-2</fullName>
    </recommendedName>
</protein>
<name>IF2_SHIB3</name>
<evidence type="ECO:0000250" key="1"/>
<evidence type="ECO:0000255" key="2">
    <source>
        <dbReference type="HAMAP-Rule" id="MF_00100"/>
    </source>
</evidence>
<evidence type="ECO:0000256" key="3">
    <source>
        <dbReference type="SAM" id="MobiDB-lite"/>
    </source>
</evidence>
<reference key="1">
    <citation type="submission" date="2008-05" db="EMBL/GenBank/DDBJ databases">
        <title>Complete sequence of Shigella boydii serotype 18 strain BS512.</title>
        <authorList>
            <person name="Rasko D.A."/>
            <person name="Rosovitz M."/>
            <person name="Maurelli A.T."/>
            <person name="Myers G."/>
            <person name="Seshadri R."/>
            <person name="Cer R."/>
            <person name="Jiang L."/>
            <person name="Ravel J."/>
            <person name="Sebastian Y."/>
        </authorList>
    </citation>
    <scope>NUCLEOTIDE SEQUENCE [LARGE SCALE GENOMIC DNA]</scope>
    <source>
        <strain>CDC 3083-94 / BS512</strain>
    </source>
</reference>
<comment type="function">
    <text evidence="2">One of the essential components for the initiation of protein synthesis. Protects formylmethionyl-tRNA from spontaneous hydrolysis and promotes its binding to the 30S ribosomal subunits. Also involved in the hydrolysis of GTP during the formation of the 70S ribosomal complex.</text>
</comment>
<comment type="subcellular location">
    <subcellularLocation>
        <location evidence="2">Cytoplasm</location>
    </subcellularLocation>
</comment>
<comment type="similarity">
    <text evidence="2">Belongs to the TRAFAC class translation factor GTPase superfamily. Classic translation factor GTPase family. IF-2 subfamily.</text>
</comment>
<organism>
    <name type="scientific">Shigella boydii serotype 18 (strain CDC 3083-94 / BS512)</name>
    <dbReference type="NCBI Taxonomy" id="344609"/>
    <lineage>
        <taxon>Bacteria</taxon>
        <taxon>Pseudomonadati</taxon>
        <taxon>Pseudomonadota</taxon>
        <taxon>Gammaproteobacteria</taxon>
        <taxon>Enterobacterales</taxon>
        <taxon>Enterobacteriaceae</taxon>
        <taxon>Shigella</taxon>
    </lineage>
</organism>
<proteinExistence type="inferred from homology"/>